<accession>Q7T1K4</accession>
<feature type="chain" id="PRO_0000053713" description="Androgen receptor">
    <location>
        <begin position="1"/>
        <end position="777"/>
    </location>
</feature>
<feature type="domain" description="NR LBD" evidence="5">
    <location>
        <begin position="526"/>
        <end position="757"/>
    </location>
</feature>
<feature type="DNA-binding region" description="Nuclear receptor" evidence="4">
    <location>
        <begin position="417"/>
        <end position="489"/>
    </location>
</feature>
<feature type="zinc finger region" description="NR C4-type" evidence="4">
    <location>
        <begin position="417"/>
        <end position="434"/>
    </location>
</feature>
<feature type="zinc finger region" description="NR C4-type" evidence="4">
    <location>
        <begin position="453"/>
        <end position="472"/>
    </location>
</feature>
<feature type="region of interest" description="Modulating" evidence="1">
    <location>
        <begin position="1"/>
        <end position="416"/>
    </location>
</feature>
<feature type="region of interest" description="Disordered" evidence="6">
    <location>
        <begin position="53"/>
        <end position="95"/>
    </location>
</feature>
<feature type="region of interest" description="Disordered" evidence="6">
    <location>
        <begin position="110"/>
        <end position="132"/>
    </location>
</feature>
<feature type="region of interest" description="Disordered" evidence="6">
    <location>
        <begin position="205"/>
        <end position="241"/>
    </location>
</feature>
<feature type="binding site" evidence="1">
    <location>
        <position position="563"/>
    </location>
    <ligand>
        <name>17beta-hydroxy-5alpha-androstan-3-one</name>
        <dbReference type="ChEBI" id="CHEBI:16330"/>
    </ligand>
</feature>
<feature type="binding site" evidence="1">
    <location>
        <position position="610"/>
    </location>
    <ligand>
        <name>17beta-hydroxy-5alpha-androstan-3-one</name>
        <dbReference type="ChEBI" id="CHEBI:16330"/>
    </ligand>
</feature>
<feature type="binding site" evidence="1">
    <location>
        <position position="735"/>
    </location>
    <ligand>
        <name>17beta-hydroxy-5alpha-androstan-3-one</name>
        <dbReference type="ChEBI" id="CHEBI:16330"/>
    </ligand>
</feature>
<feature type="site" description="Interaction with coactivator LXXL motif" evidence="1">
    <location>
        <position position="578"/>
    </location>
</feature>
<feature type="site" description="Interaction with coactivator FXXLF motif" evidence="1">
    <location>
        <position position="755"/>
    </location>
</feature>
<keyword id="KW-0963">Cytoplasm</keyword>
<keyword id="KW-0238">DNA-binding</keyword>
<keyword id="KW-0446">Lipid-binding</keyword>
<keyword id="KW-0479">Metal-binding</keyword>
<keyword id="KW-0539">Nucleus</keyword>
<keyword id="KW-0675">Receptor</keyword>
<keyword id="KW-0754">Steroid-binding</keyword>
<keyword id="KW-0804">Transcription</keyword>
<keyword id="KW-0805">Transcription regulation</keyword>
<keyword id="KW-0862">Zinc</keyword>
<keyword id="KW-0863">Zinc-finger</keyword>
<reference evidence="8" key="1">
    <citation type="journal article" date="2003" name="Gen. Comp. Endocrinol.">
        <title>Cloning and characterization of androgen receptor from bullfrog, Rana catesbeiana.</title>
        <authorList>
            <person name="Chattopadhyay S."/>
            <person name="Park J.H."/>
            <person name="Seong J.Y."/>
            <person name="Kwon H.B."/>
            <person name="Lee K."/>
        </authorList>
    </citation>
    <scope>NUCLEOTIDE SEQUENCE [MRNA]</scope>
    <scope>TISSUE SPECIFICITY</scope>
    <source>
        <tissue evidence="7">Testis</tissue>
    </source>
</reference>
<organism evidence="9">
    <name type="scientific">Aquarana catesbeiana</name>
    <name type="common">American bullfrog</name>
    <name type="synonym">Rana catesbeiana</name>
    <dbReference type="NCBI Taxonomy" id="8400"/>
    <lineage>
        <taxon>Eukaryota</taxon>
        <taxon>Metazoa</taxon>
        <taxon>Chordata</taxon>
        <taxon>Craniata</taxon>
        <taxon>Vertebrata</taxon>
        <taxon>Euteleostomi</taxon>
        <taxon>Amphibia</taxon>
        <taxon>Batrachia</taxon>
        <taxon>Anura</taxon>
        <taxon>Neobatrachia</taxon>
        <taxon>Ranoidea</taxon>
        <taxon>Ranidae</taxon>
        <taxon>Aquarana</taxon>
    </lineage>
</organism>
<comment type="function">
    <text evidence="2 3">Steroid hormone receptors are ligand-activated transcription factors that regulate eukaryotic gene expression and affect cellular proliferation and differentiation in target tissues. Transcription factor activity is modulated by bound coactivator and corepressor proteins.</text>
</comment>
<comment type="subunit">
    <text evidence="1">Binds DNA as a homodimer. Interacts via the ligand-binding domain with LXXLL and FXXLF motifs from coactivator proteins (By similarity). Interacts (via ligand-binding domain) with TRIM68 (By similarity).</text>
</comment>
<comment type="subcellular location">
    <subcellularLocation>
        <location evidence="2">Nucleus</location>
    </subcellularLocation>
    <subcellularLocation>
        <location evidence="2">Cytoplasm</location>
    </subcellularLocation>
</comment>
<comment type="tissue specificity">
    <text evidence="7">Detected in somatic Leydig and Sertoli cells in testis with high level expression. Also detected at lower expression levels in forebrain and heart.</text>
</comment>
<comment type="domain">
    <text evidence="1">Composed of three domains: a modulating N-terminal domain, a DNA-binding domain and a C-terminal ligand-binding domain. In the presence of bound steroid the ligand-binding domain interacts with the N-terminal modulating domain, and thereby activates AR transcription factor activity. Agonist binding is required for dimerization and binding to target DNA (By similarity).</text>
</comment>
<comment type="similarity">
    <text evidence="8">Belongs to the nuclear hormone receptor family. NR3 subfamily.</text>
</comment>
<name>ANDR_AQUCT</name>
<gene>
    <name type="primary">ar</name>
    <name type="synonym">nr3c4</name>
</gene>
<dbReference type="EMBL" id="AY324231">
    <property type="protein sequence ID" value="AAP85538.1"/>
    <property type="molecule type" value="mRNA"/>
</dbReference>
<dbReference type="SMR" id="Q7T1K4"/>
<dbReference type="GO" id="GO:0005737">
    <property type="term" value="C:cytoplasm"/>
    <property type="evidence" value="ECO:0007669"/>
    <property type="project" value="UniProtKB-SubCell"/>
</dbReference>
<dbReference type="GO" id="GO:0005634">
    <property type="term" value="C:nucleus"/>
    <property type="evidence" value="ECO:0000314"/>
    <property type="project" value="UniProtKB"/>
</dbReference>
<dbReference type="GO" id="GO:0005497">
    <property type="term" value="F:androgen binding"/>
    <property type="evidence" value="ECO:0000314"/>
    <property type="project" value="UniProtKB"/>
</dbReference>
<dbReference type="GO" id="GO:0003700">
    <property type="term" value="F:DNA-binding transcription factor activity"/>
    <property type="evidence" value="ECO:0000314"/>
    <property type="project" value="UniProtKB"/>
</dbReference>
<dbReference type="GO" id="GO:0050681">
    <property type="term" value="F:nuclear androgen receptor binding"/>
    <property type="evidence" value="ECO:0000250"/>
    <property type="project" value="UniProtKB"/>
</dbReference>
<dbReference type="GO" id="GO:0004879">
    <property type="term" value="F:nuclear receptor activity"/>
    <property type="evidence" value="ECO:0000314"/>
    <property type="project" value="UniProtKB"/>
</dbReference>
<dbReference type="GO" id="GO:0043565">
    <property type="term" value="F:sequence-specific DNA binding"/>
    <property type="evidence" value="ECO:0007669"/>
    <property type="project" value="InterPro"/>
</dbReference>
<dbReference type="GO" id="GO:0005496">
    <property type="term" value="F:steroid binding"/>
    <property type="evidence" value="ECO:0007669"/>
    <property type="project" value="UniProtKB-KW"/>
</dbReference>
<dbReference type="GO" id="GO:0008270">
    <property type="term" value="F:zinc ion binding"/>
    <property type="evidence" value="ECO:0007669"/>
    <property type="project" value="UniProtKB-KW"/>
</dbReference>
<dbReference type="GO" id="GO:0030521">
    <property type="term" value="P:androgen receptor signaling pathway"/>
    <property type="evidence" value="ECO:0007669"/>
    <property type="project" value="InterPro"/>
</dbReference>
<dbReference type="GO" id="GO:0006355">
    <property type="term" value="P:regulation of DNA-templated transcription"/>
    <property type="evidence" value="ECO:0000303"/>
    <property type="project" value="UniProtKB"/>
</dbReference>
<dbReference type="CDD" id="cd07173">
    <property type="entry name" value="NR_DBD_AR"/>
    <property type="match status" value="1"/>
</dbReference>
<dbReference type="CDD" id="cd07073">
    <property type="entry name" value="NR_LBD_AR"/>
    <property type="match status" value="1"/>
</dbReference>
<dbReference type="FunFam" id="3.30.50.10:FF:000024">
    <property type="entry name" value="Androgen receptor"/>
    <property type="match status" value="1"/>
</dbReference>
<dbReference type="FunFam" id="1.10.565.10:FF:000004">
    <property type="entry name" value="Androgen receptor variant"/>
    <property type="match status" value="1"/>
</dbReference>
<dbReference type="Gene3D" id="3.30.50.10">
    <property type="entry name" value="Erythroid Transcription Factor GATA-1, subunit A"/>
    <property type="match status" value="1"/>
</dbReference>
<dbReference type="Gene3D" id="1.10.565.10">
    <property type="entry name" value="Retinoid X Receptor"/>
    <property type="match status" value="1"/>
</dbReference>
<dbReference type="InterPro" id="IPR001103">
    <property type="entry name" value="Andrgn_rcpt"/>
</dbReference>
<dbReference type="InterPro" id="IPR035500">
    <property type="entry name" value="NHR-like_dom_sf"/>
</dbReference>
<dbReference type="InterPro" id="IPR000536">
    <property type="entry name" value="Nucl_hrmn_rcpt_lig-bd"/>
</dbReference>
<dbReference type="InterPro" id="IPR050200">
    <property type="entry name" value="Nuclear_hormone_rcpt_NR3"/>
</dbReference>
<dbReference type="InterPro" id="IPR001628">
    <property type="entry name" value="Znf_hrmn_rcpt"/>
</dbReference>
<dbReference type="InterPro" id="IPR013088">
    <property type="entry name" value="Znf_NHR/GATA"/>
</dbReference>
<dbReference type="PANTHER" id="PTHR48092">
    <property type="entry name" value="KNIRPS-RELATED PROTEIN-RELATED"/>
    <property type="match status" value="1"/>
</dbReference>
<dbReference type="Pfam" id="PF02166">
    <property type="entry name" value="Androgen_recep"/>
    <property type="match status" value="2"/>
</dbReference>
<dbReference type="Pfam" id="PF00104">
    <property type="entry name" value="Hormone_recep"/>
    <property type="match status" value="1"/>
</dbReference>
<dbReference type="Pfam" id="PF00105">
    <property type="entry name" value="zf-C4"/>
    <property type="match status" value="1"/>
</dbReference>
<dbReference type="PRINTS" id="PR00047">
    <property type="entry name" value="STROIDFINGER"/>
</dbReference>
<dbReference type="SMART" id="SM00430">
    <property type="entry name" value="HOLI"/>
    <property type="match status" value="1"/>
</dbReference>
<dbReference type="SMART" id="SM00399">
    <property type="entry name" value="ZnF_C4"/>
    <property type="match status" value="1"/>
</dbReference>
<dbReference type="SUPFAM" id="SSF57716">
    <property type="entry name" value="Glucocorticoid receptor-like (DNA-binding domain)"/>
    <property type="match status" value="1"/>
</dbReference>
<dbReference type="SUPFAM" id="SSF48508">
    <property type="entry name" value="Nuclear receptor ligand-binding domain"/>
    <property type="match status" value="1"/>
</dbReference>
<dbReference type="PROSITE" id="PS51843">
    <property type="entry name" value="NR_LBD"/>
    <property type="match status" value="1"/>
</dbReference>
<dbReference type="PROSITE" id="PS00031">
    <property type="entry name" value="NUCLEAR_REC_DBD_1"/>
    <property type="match status" value="1"/>
</dbReference>
<dbReference type="PROSITE" id="PS51030">
    <property type="entry name" value="NUCLEAR_REC_DBD_2"/>
    <property type="match status" value="1"/>
</dbReference>
<sequence>MEVHIGLGGVYKQPPGKMIRGAFENLFLSVREALQGERRSAASLDTSSPISACVHPHPTWNEPSTWTEVRGTPWREPQGAQPDPPPCSPRSQAPQFTLSSCTTELKEILGEQGGMPEEGNSESASKEGYPESISDSAKEICKAVSVSLGLSMEALEHLSAAGEWQRGDCMFAGPPHHTMGAQTCQVAEEDKSDTSFSQYREGAFRRAGQSTYSAGKAPEDGSSLPTEDKEQPCTDMALSEPGSLRSRGMEVMPSLTLYKPTAFMEDASAYPGRDYYSFQMALAPHGRIKVESPIEFAGSAWGGPSRYSEFPGFSHCGPSANWHSLFEEGQATASYTDSSLYSYPRSHVPAGPDGEFSAEAWYPATAMLGRVHMAVPMRPRMTHGWTATLGIRRRLGWTGVESTFYPIDYYFPPQKPCLSCEDEASGCHYEALTCGSCKVFFKRAAEGNQKYLCASRNDCTIDKFRRKNCPSCRLRKCYEAGMTLGARKLKKLGNLKAQEELEGSPGQSEGREMPPNMSIPQLEGYSCQPIFLNVLEAIEPMVVCSGHDNNQPDSFALLLSSLNELGERQLVHVVKWAKALPGFRNLHVNDQMTVIQYSWMGLMIFAMGWRSFKNVNSRMLYFAPDLVFNEYRMHKSRMYSQCVRMRHLSQEFGWLQVTPEEFLCDEGPSALSIIPVEGLKDQKCFDELRMNYIKELDRVISCKRNNPASSSPRFFNLPKLLGSVQPIDVNLVQFTFGLFGKAQMVSVDFPEMMSEIISVQVPKILSGRVKPLYFHSS</sequence>
<proteinExistence type="evidence at transcript level"/>
<evidence type="ECO:0000250" key="1"/>
<evidence type="ECO:0000250" key="2">
    <source>
        <dbReference type="UniProtKB" id="P10275"/>
    </source>
</evidence>
<evidence type="ECO:0000250" key="3">
    <source>
        <dbReference type="UniProtKB" id="P15207"/>
    </source>
</evidence>
<evidence type="ECO:0000255" key="4">
    <source>
        <dbReference type="PROSITE-ProRule" id="PRU00407"/>
    </source>
</evidence>
<evidence type="ECO:0000255" key="5">
    <source>
        <dbReference type="PROSITE-ProRule" id="PRU01189"/>
    </source>
</evidence>
<evidence type="ECO:0000256" key="6">
    <source>
        <dbReference type="SAM" id="MobiDB-lite"/>
    </source>
</evidence>
<evidence type="ECO:0000269" key="7">
    <source>
    </source>
</evidence>
<evidence type="ECO:0000305" key="8"/>
<evidence type="ECO:0000312" key="9">
    <source>
        <dbReference type="EMBL" id="AAP85538.1"/>
    </source>
</evidence>
<protein>
    <recommendedName>
        <fullName>Androgen receptor</fullName>
        <shortName>bfAR</shortName>
    </recommendedName>
    <alternativeName>
        <fullName>Dihydrotestosterone receptor</fullName>
    </alternativeName>
    <alternativeName>
        <fullName>Nuclear receptor subfamily 3 group C member 4</fullName>
    </alternativeName>
</protein>